<organism>
    <name type="scientific">Pelagibacter ubique (strain HTCC1062)</name>
    <dbReference type="NCBI Taxonomy" id="335992"/>
    <lineage>
        <taxon>Bacteria</taxon>
        <taxon>Pseudomonadati</taxon>
        <taxon>Pseudomonadota</taxon>
        <taxon>Alphaproteobacteria</taxon>
        <taxon>Candidatus Pelagibacterales</taxon>
        <taxon>Candidatus Pelagibacteraceae</taxon>
        <taxon>Candidatus Pelagibacter</taxon>
    </lineage>
</organism>
<evidence type="ECO:0000255" key="1">
    <source>
        <dbReference type="HAMAP-Rule" id="MF_00379"/>
    </source>
</evidence>
<feature type="chain" id="PRO_0000345864" description="tRNA modification GTPase MnmE">
    <location>
        <begin position="1"/>
        <end position="443"/>
    </location>
</feature>
<feature type="domain" description="TrmE-type G">
    <location>
        <begin position="214"/>
        <end position="366"/>
    </location>
</feature>
<feature type="binding site" evidence="1">
    <location>
        <position position="19"/>
    </location>
    <ligand>
        <name>(6S)-5-formyl-5,6,7,8-tetrahydrofolate</name>
        <dbReference type="ChEBI" id="CHEBI:57457"/>
    </ligand>
</feature>
<feature type="binding site" evidence="1">
    <location>
        <position position="78"/>
    </location>
    <ligand>
        <name>(6S)-5-formyl-5,6,7,8-tetrahydrofolate</name>
        <dbReference type="ChEBI" id="CHEBI:57457"/>
    </ligand>
</feature>
<feature type="binding site" evidence="1">
    <location>
        <position position="118"/>
    </location>
    <ligand>
        <name>(6S)-5-formyl-5,6,7,8-tetrahydrofolate</name>
        <dbReference type="ChEBI" id="CHEBI:57457"/>
    </ligand>
</feature>
<feature type="binding site" evidence="1">
    <location>
        <begin position="224"/>
        <end position="229"/>
    </location>
    <ligand>
        <name>GTP</name>
        <dbReference type="ChEBI" id="CHEBI:37565"/>
    </ligand>
</feature>
<feature type="binding site" evidence="1">
    <location>
        <position position="224"/>
    </location>
    <ligand>
        <name>K(+)</name>
        <dbReference type="ChEBI" id="CHEBI:29103"/>
    </ligand>
</feature>
<feature type="binding site" evidence="1">
    <location>
        <position position="228"/>
    </location>
    <ligand>
        <name>Mg(2+)</name>
        <dbReference type="ChEBI" id="CHEBI:18420"/>
    </ligand>
</feature>
<feature type="binding site" evidence="1">
    <location>
        <begin position="243"/>
        <end position="249"/>
    </location>
    <ligand>
        <name>GTP</name>
        <dbReference type="ChEBI" id="CHEBI:37565"/>
    </ligand>
</feature>
<feature type="binding site" evidence="1">
    <location>
        <position position="243"/>
    </location>
    <ligand>
        <name>K(+)</name>
        <dbReference type="ChEBI" id="CHEBI:29103"/>
    </ligand>
</feature>
<feature type="binding site" evidence="1">
    <location>
        <position position="245"/>
    </location>
    <ligand>
        <name>K(+)</name>
        <dbReference type="ChEBI" id="CHEBI:29103"/>
    </ligand>
</feature>
<feature type="binding site" evidence="1">
    <location>
        <position position="248"/>
    </location>
    <ligand>
        <name>K(+)</name>
        <dbReference type="ChEBI" id="CHEBI:29103"/>
    </ligand>
</feature>
<feature type="binding site" evidence="1">
    <location>
        <position position="249"/>
    </location>
    <ligand>
        <name>Mg(2+)</name>
        <dbReference type="ChEBI" id="CHEBI:18420"/>
    </ligand>
</feature>
<feature type="binding site" evidence="1">
    <location>
        <begin position="268"/>
        <end position="271"/>
    </location>
    <ligand>
        <name>GTP</name>
        <dbReference type="ChEBI" id="CHEBI:37565"/>
    </ligand>
</feature>
<feature type="binding site" evidence="1">
    <location>
        <position position="443"/>
    </location>
    <ligand>
        <name>(6S)-5-formyl-5,6,7,8-tetrahydrofolate</name>
        <dbReference type="ChEBI" id="CHEBI:57457"/>
    </ligand>
</feature>
<protein>
    <recommendedName>
        <fullName evidence="1">tRNA modification GTPase MnmE</fullName>
        <ecNumber evidence="1">3.6.-.-</ecNumber>
    </recommendedName>
</protein>
<accession>Q4FNR7</accession>
<gene>
    <name evidence="1" type="primary">mnmE</name>
    <name evidence="1" type="synonym">trmE</name>
    <name type="ordered locus">SAR11_0350</name>
</gene>
<comment type="function">
    <text evidence="1">Exhibits a very high intrinsic GTPase hydrolysis rate. Involved in the addition of a carboxymethylaminomethyl (cmnm) group at the wobble position (U34) of certain tRNAs, forming tRNA-cmnm(5)s(2)U34.</text>
</comment>
<comment type="cofactor">
    <cofactor evidence="1">
        <name>K(+)</name>
        <dbReference type="ChEBI" id="CHEBI:29103"/>
    </cofactor>
    <text evidence="1">Binds 1 potassium ion per subunit.</text>
</comment>
<comment type="subunit">
    <text evidence="1">Homodimer. Heterotetramer of two MnmE and two MnmG subunits.</text>
</comment>
<comment type="subcellular location">
    <subcellularLocation>
        <location evidence="1">Cytoplasm</location>
    </subcellularLocation>
</comment>
<comment type="similarity">
    <text evidence="1">Belongs to the TRAFAC class TrmE-Era-EngA-EngB-Septin-like GTPase superfamily. TrmE GTPase family.</text>
</comment>
<sequence>MTIYALSTGPGISGIAIVRVSGKDTKKVIKLLTNAALPETRVATLRKINKINTSELIDEGIILWFPGPESYTGEDMAEFHIHGSKAVIDALHHSISKIKNCRLADPGEFTKLAFQNGKINLLKAESIADLISAETEIQRQQAIKIMNGKSADKFNNLREKLLKILSHVEAKIDFPDEDLPEDILKNIKKISNEVILNIKKILDDQKVGERIREGFKIAIIGPTNAGKSSLLNHLSNRDVAIVSEIAGTTRDVIETHLNIDGYPVVVSDTAGIRDSKNEIEKKGIKLALDKADNADLKLIVIDAKSIDFKGVLKELMDENAILVINKSDLLNKDLNSEIKNYEHVLISVKNNLNLEDLISKIKNKLKNKFITSEDILITRARHRQHLEQSLNCLKNFEEKNEAEDFDKAAEDLRLATRHLGMIVGKVDVEEILGSIFNDFCIGK</sequence>
<dbReference type="EC" id="3.6.-.-" evidence="1"/>
<dbReference type="EMBL" id="CP000084">
    <property type="protein sequence ID" value="AAZ21172.1"/>
    <property type="molecule type" value="Genomic_DNA"/>
</dbReference>
<dbReference type="RefSeq" id="WP_011281642.1">
    <property type="nucleotide sequence ID" value="NC_007205.1"/>
</dbReference>
<dbReference type="SMR" id="Q4FNR7"/>
<dbReference type="STRING" id="335992.SAR11_0350"/>
<dbReference type="GeneID" id="66294848"/>
<dbReference type="KEGG" id="pub:SAR11_0350"/>
<dbReference type="eggNOG" id="COG0486">
    <property type="taxonomic scope" value="Bacteria"/>
</dbReference>
<dbReference type="HOGENOM" id="CLU_019624_3_1_5"/>
<dbReference type="OrthoDB" id="9805918at2"/>
<dbReference type="Proteomes" id="UP000002528">
    <property type="component" value="Chromosome"/>
</dbReference>
<dbReference type="GO" id="GO:0005737">
    <property type="term" value="C:cytoplasm"/>
    <property type="evidence" value="ECO:0007669"/>
    <property type="project" value="UniProtKB-SubCell"/>
</dbReference>
<dbReference type="GO" id="GO:0005525">
    <property type="term" value="F:GTP binding"/>
    <property type="evidence" value="ECO:0007669"/>
    <property type="project" value="UniProtKB-UniRule"/>
</dbReference>
<dbReference type="GO" id="GO:0003924">
    <property type="term" value="F:GTPase activity"/>
    <property type="evidence" value="ECO:0007669"/>
    <property type="project" value="UniProtKB-UniRule"/>
</dbReference>
<dbReference type="GO" id="GO:0046872">
    <property type="term" value="F:metal ion binding"/>
    <property type="evidence" value="ECO:0007669"/>
    <property type="project" value="UniProtKB-KW"/>
</dbReference>
<dbReference type="GO" id="GO:0030488">
    <property type="term" value="P:tRNA methylation"/>
    <property type="evidence" value="ECO:0007669"/>
    <property type="project" value="TreeGrafter"/>
</dbReference>
<dbReference type="GO" id="GO:0002098">
    <property type="term" value="P:tRNA wobble uridine modification"/>
    <property type="evidence" value="ECO:0007669"/>
    <property type="project" value="TreeGrafter"/>
</dbReference>
<dbReference type="CDD" id="cd04164">
    <property type="entry name" value="trmE"/>
    <property type="match status" value="1"/>
</dbReference>
<dbReference type="CDD" id="cd14858">
    <property type="entry name" value="TrmE_N"/>
    <property type="match status" value="1"/>
</dbReference>
<dbReference type="FunFam" id="3.30.1360.120:FF:000007">
    <property type="entry name" value="tRNA modification GTPase GTPBP3, mitochondrial"/>
    <property type="match status" value="1"/>
</dbReference>
<dbReference type="Gene3D" id="3.40.50.300">
    <property type="entry name" value="P-loop containing nucleotide triphosphate hydrolases"/>
    <property type="match status" value="1"/>
</dbReference>
<dbReference type="Gene3D" id="3.30.1360.120">
    <property type="entry name" value="Probable tRNA modification gtpase trme, domain 1"/>
    <property type="match status" value="1"/>
</dbReference>
<dbReference type="Gene3D" id="1.20.120.430">
    <property type="entry name" value="tRNA modification GTPase MnmE domain 2"/>
    <property type="match status" value="1"/>
</dbReference>
<dbReference type="HAMAP" id="MF_00379">
    <property type="entry name" value="GTPase_MnmE"/>
    <property type="match status" value="1"/>
</dbReference>
<dbReference type="InterPro" id="IPR031168">
    <property type="entry name" value="G_TrmE"/>
</dbReference>
<dbReference type="InterPro" id="IPR006073">
    <property type="entry name" value="GTP-bd"/>
</dbReference>
<dbReference type="InterPro" id="IPR018948">
    <property type="entry name" value="GTP-bd_TrmE_N"/>
</dbReference>
<dbReference type="InterPro" id="IPR004520">
    <property type="entry name" value="GTPase_MnmE"/>
</dbReference>
<dbReference type="InterPro" id="IPR027368">
    <property type="entry name" value="MnmE_dom2"/>
</dbReference>
<dbReference type="InterPro" id="IPR025867">
    <property type="entry name" value="MnmE_helical"/>
</dbReference>
<dbReference type="InterPro" id="IPR027417">
    <property type="entry name" value="P-loop_NTPase"/>
</dbReference>
<dbReference type="InterPro" id="IPR005225">
    <property type="entry name" value="Small_GTP-bd"/>
</dbReference>
<dbReference type="InterPro" id="IPR027266">
    <property type="entry name" value="TrmE/GcvT_dom1"/>
</dbReference>
<dbReference type="NCBIfam" id="TIGR00450">
    <property type="entry name" value="mnmE_trmE_thdF"/>
    <property type="match status" value="1"/>
</dbReference>
<dbReference type="NCBIfam" id="NF003661">
    <property type="entry name" value="PRK05291.1-3"/>
    <property type="match status" value="1"/>
</dbReference>
<dbReference type="NCBIfam" id="TIGR00231">
    <property type="entry name" value="small_GTP"/>
    <property type="match status" value="1"/>
</dbReference>
<dbReference type="PANTHER" id="PTHR42714">
    <property type="entry name" value="TRNA MODIFICATION GTPASE GTPBP3"/>
    <property type="match status" value="1"/>
</dbReference>
<dbReference type="PANTHER" id="PTHR42714:SF2">
    <property type="entry name" value="TRNA MODIFICATION GTPASE GTPBP3, MITOCHONDRIAL"/>
    <property type="match status" value="1"/>
</dbReference>
<dbReference type="Pfam" id="PF01926">
    <property type="entry name" value="MMR_HSR1"/>
    <property type="match status" value="1"/>
</dbReference>
<dbReference type="Pfam" id="PF12631">
    <property type="entry name" value="MnmE_helical"/>
    <property type="match status" value="1"/>
</dbReference>
<dbReference type="Pfam" id="PF10396">
    <property type="entry name" value="TrmE_N"/>
    <property type="match status" value="1"/>
</dbReference>
<dbReference type="SUPFAM" id="SSF52540">
    <property type="entry name" value="P-loop containing nucleoside triphosphate hydrolases"/>
    <property type="match status" value="1"/>
</dbReference>
<dbReference type="SUPFAM" id="SSF116878">
    <property type="entry name" value="TrmE connector domain"/>
    <property type="match status" value="1"/>
</dbReference>
<dbReference type="PROSITE" id="PS51709">
    <property type="entry name" value="G_TRME"/>
    <property type="match status" value="1"/>
</dbReference>
<keyword id="KW-0963">Cytoplasm</keyword>
<keyword id="KW-0342">GTP-binding</keyword>
<keyword id="KW-0378">Hydrolase</keyword>
<keyword id="KW-0460">Magnesium</keyword>
<keyword id="KW-0479">Metal-binding</keyword>
<keyword id="KW-0547">Nucleotide-binding</keyword>
<keyword id="KW-0630">Potassium</keyword>
<keyword id="KW-1185">Reference proteome</keyword>
<keyword id="KW-0819">tRNA processing</keyword>
<proteinExistence type="inferred from homology"/>
<reference key="1">
    <citation type="journal article" date="2005" name="Science">
        <title>Genome streamlining in a cosmopolitan oceanic bacterium.</title>
        <authorList>
            <person name="Giovannoni S.J."/>
            <person name="Tripp H.J."/>
            <person name="Givan S."/>
            <person name="Podar M."/>
            <person name="Vergin K.L."/>
            <person name="Baptista D."/>
            <person name="Bibbs L."/>
            <person name="Eads J."/>
            <person name="Richardson T.H."/>
            <person name="Noordewier M."/>
            <person name="Rappe M.S."/>
            <person name="Short J.M."/>
            <person name="Carrington J.C."/>
            <person name="Mathur E.J."/>
        </authorList>
    </citation>
    <scope>NUCLEOTIDE SEQUENCE [LARGE SCALE GENOMIC DNA]</scope>
    <source>
        <strain>HTCC1062</strain>
    </source>
</reference>
<name>MNME_PELUB</name>